<organism>
    <name type="scientific">Dehalococcoides mccartyi (strain ATCC BAA-2100 / JCM 16839 / KCTC 5957 / BAV1)</name>
    <dbReference type="NCBI Taxonomy" id="216389"/>
    <lineage>
        <taxon>Bacteria</taxon>
        <taxon>Bacillati</taxon>
        <taxon>Chloroflexota</taxon>
        <taxon>Dehalococcoidia</taxon>
        <taxon>Dehalococcoidales</taxon>
        <taxon>Dehalococcoidaceae</taxon>
        <taxon>Dehalococcoides</taxon>
    </lineage>
</organism>
<protein>
    <recommendedName>
        <fullName evidence="1">Trigger factor</fullName>
        <shortName evidence="1">TF</shortName>
        <ecNumber evidence="1">5.2.1.8</ecNumber>
    </recommendedName>
    <alternativeName>
        <fullName evidence="1">PPIase</fullName>
    </alternativeName>
</protein>
<keyword id="KW-0131">Cell cycle</keyword>
<keyword id="KW-0132">Cell division</keyword>
<keyword id="KW-0143">Chaperone</keyword>
<keyword id="KW-0963">Cytoplasm</keyword>
<keyword id="KW-0413">Isomerase</keyword>
<keyword id="KW-0697">Rotamase</keyword>
<feature type="chain" id="PRO_1000079037" description="Trigger factor">
    <location>
        <begin position="1"/>
        <end position="447"/>
    </location>
</feature>
<feature type="domain" description="PPIase FKBP-type" evidence="1">
    <location>
        <begin position="159"/>
        <end position="244"/>
    </location>
</feature>
<gene>
    <name evidence="1" type="primary">tig</name>
    <name type="ordered locus">DehaBAV1_0644</name>
</gene>
<evidence type="ECO:0000255" key="1">
    <source>
        <dbReference type="HAMAP-Rule" id="MF_00303"/>
    </source>
</evidence>
<reference key="1">
    <citation type="submission" date="2007-05" db="EMBL/GenBank/DDBJ databases">
        <title>Complete sequence of Dehalococcoides sp. BAV1.</title>
        <authorList>
            <consortium name="US DOE Joint Genome Institute"/>
            <person name="Copeland A."/>
            <person name="Lucas S."/>
            <person name="Lapidus A."/>
            <person name="Barry K."/>
            <person name="Detter J.C."/>
            <person name="Glavina del Rio T."/>
            <person name="Hammon N."/>
            <person name="Israni S."/>
            <person name="Pitluck S."/>
            <person name="Lowry S."/>
            <person name="Clum A."/>
            <person name="Schmutz J."/>
            <person name="Larimer F."/>
            <person name="Land M."/>
            <person name="Hauser L."/>
            <person name="Kyrpides N."/>
            <person name="Kim E."/>
            <person name="Ritalahti K.M."/>
            <person name="Loeffler F."/>
            <person name="Richardson P."/>
        </authorList>
    </citation>
    <scope>NUCLEOTIDE SEQUENCE [LARGE SCALE GENOMIC DNA]</scope>
    <source>
        <strain>ATCC BAA-2100 / JCM 16839 / KCTC 5957 / BAV1</strain>
    </source>
</reference>
<proteinExistence type="inferred from homology"/>
<accession>A5FRE4</accession>
<sequence>MKVTDKKIEGCQASITVEMDSTEVEEGLSKTYRRLVKKVEIPGFRKGKAPRDVFEKYVSREKMLDELVDDIVPEACQKAIQDEEIKPFATPKVAMVTTDPFVFSARIPLPPVVELGDYKTIRATKETVEIAEENIDTVVDQVLHQRATWETAERPVKMGDMLLMQVESTLNGEPYLNREDMQYSVREEAIYPAPGFGGYLVDMVAGEPKEFSIVFPEDHARAELAGKTAAFKVTVREIKEEKLPELNDAFAHELNPEFNTLSELRQRIRENMQDRQDDKAQAKFEDQIVEALIKMSKIDYPEVMVEAELDQIIEQQLQRLQSNVKSPEEFRAMLSQMTPEDMQQRYRPLAEQRVASSLALGKLATTENLVPNDEEVDAEIEKLITDAGDKKEEEKALYNQPETRGRLIQLLTARKTMAFIDEIALQPALEAVESKADEDEKTEEADK</sequence>
<comment type="function">
    <text evidence="1">Involved in protein export. Acts as a chaperone by maintaining the newly synthesized protein in an open conformation. Functions as a peptidyl-prolyl cis-trans isomerase.</text>
</comment>
<comment type="catalytic activity">
    <reaction evidence="1">
        <text>[protein]-peptidylproline (omega=180) = [protein]-peptidylproline (omega=0)</text>
        <dbReference type="Rhea" id="RHEA:16237"/>
        <dbReference type="Rhea" id="RHEA-COMP:10747"/>
        <dbReference type="Rhea" id="RHEA-COMP:10748"/>
        <dbReference type="ChEBI" id="CHEBI:83833"/>
        <dbReference type="ChEBI" id="CHEBI:83834"/>
        <dbReference type="EC" id="5.2.1.8"/>
    </reaction>
</comment>
<comment type="subcellular location">
    <subcellularLocation>
        <location>Cytoplasm</location>
    </subcellularLocation>
    <text evidence="1">About half TF is bound to the ribosome near the polypeptide exit tunnel while the other half is free in the cytoplasm.</text>
</comment>
<comment type="domain">
    <text evidence="1">Consists of 3 domains; the N-terminus binds the ribosome, the middle domain has PPIase activity, while the C-terminus has intrinsic chaperone activity on its own.</text>
</comment>
<comment type="similarity">
    <text evidence="1">Belongs to the FKBP-type PPIase family. Tig subfamily.</text>
</comment>
<dbReference type="EC" id="5.2.1.8" evidence="1"/>
<dbReference type="EMBL" id="CP000688">
    <property type="protein sequence ID" value="ABQ17229.1"/>
    <property type="molecule type" value="Genomic_DNA"/>
</dbReference>
<dbReference type="SMR" id="A5FRE4"/>
<dbReference type="KEGG" id="deb:DehaBAV1_0644"/>
<dbReference type="PATRIC" id="fig|216389.18.peg.692"/>
<dbReference type="HOGENOM" id="CLU_033058_3_2_0"/>
<dbReference type="GO" id="GO:0005737">
    <property type="term" value="C:cytoplasm"/>
    <property type="evidence" value="ECO:0007669"/>
    <property type="project" value="UniProtKB-SubCell"/>
</dbReference>
<dbReference type="GO" id="GO:0003755">
    <property type="term" value="F:peptidyl-prolyl cis-trans isomerase activity"/>
    <property type="evidence" value="ECO:0007669"/>
    <property type="project" value="UniProtKB-UniRule"/>
</dbReference>
<dbReference type="GO" id="GO:0044183">
    <property type="term" value="F:protein folding chaperone"/>
    <property type="evidence" value="ECO:0007669"/>
    <property type="project" value="TreeGrafter"/>
</dbReference>
<dbReference type="GO" id="GO:0043022">
    <property type="term" value="F:ribosome binding"/>
    <property type="evidence" value="ECO:0007669"/>
    <property type="project" value="TreeGrafter"/>
</dbReference>
<dbReference type="GO" id="GO:0051083">
    <property type="term" value="P:'de novo' cotranslational protein folding"/>
    <property type="evidence" value="ECO:0007669"/>
    <property type="project" value="TreeGrafter"/>
</dbReference>
<dbReference type="GO" id="GO:0051301">
    <property type="term" value="P:cell division"/>
    <property type="evidence" value="ECO:0007669"/>
    <property type="project" value="UniProtKB-KW"/>
</dbReference>
<dbReference type="GO" id="GO:0061077">
    <property type="term" value="P:chaperone-mediated protein folding"/>
    <property type="evidence" value="ECO:0007669"/>
    <property type="project" value="TreeGrafter"/>
</dbReference>
<dbReference type="GO" id="GO:0015031">
    <property type="term" value="P:protein transport"/>
    <property type="evidence" value="ECO:0007669"/>
    <property type="project" value="UniProtKB-UniRule"/>
</dbReference>
<dbReference type="GO" id="GO:0043335">
    <property type="term" value="P:protein unfolding"/>
    <property type="evidence" value="ECO:0007669"/>
    <property type="project" value="TreeGrafter"/>
</dbReference>
<dbReference type="Gene3D" id="3.10.50.40">
    <property type="match status" value="1"/>
</dbReference>
<dbReference type="Gene3D" id="3.30.70.1050">
    <property type="entry name" value="Trigger factor ribosome-binding domain"/>
    <property type="match status" value="1"/>
</dbReference>
<dbReference type="Gene3D" id="1.10.3120.10">
    <property type="entry name" value="Trigger factor, C-terminal domain"/>
    <property type="match status" value="1"/>
</dbReference>
<dbReference type="HAMAP" id="MF_00303">
    <property type="entry name" value="Trigger_factor_Tig"/>
    <property type="match status" value="1"/>
</dbReference>
<dbReference type="InterPro" id="IPR046357">
    <property type="entry name" value="PPIase_dom_sf"/>
</dbReference>
<dbReference type="InterPro" id="IPR005215">
    <property type="entry name" value="Trig_fac"/>
</dbReference>
<dbReference type="InterPro" id="IPR008880">
    <property type="entry name" value="Trigger_fac_C"/>
</dbReference>
<dbReference type="InterPro" id="IPR037041">
    <property type="entry name" value="Trigger_fac_C_sf"/>
</dbReference>
<dbReference type="InterPro" id="IPR008881">
    <property type="entry name" value="Trigger_fac_ribosome-bd_bac"/>
</dbReference>
<dbReference type="InterPro" id="IPR036611">
    <property type="entry name" value="Trigger_fac_ribosome-bd_sf"/>
</dbReference>
<dbReference type="InterPro" id="IPR027304">
    <property type="entry name" value="Trigger_fact/SurA_dom_sf"/>
</dbReference>
<dbReference type="NCBIfam" id="TIGR00115">
    <property type="entry name" value="tig"/>
    <property type="match status" value="1"/>
</dbReference>
<dbReference type="PANTHER" id="PTHR30560">
    <property type="entry name" value="TRIGGER FACTOR CHAPERONE AND PEPTIDYL-PROLYL CIS/TRANS ISOMERASE"/>
    <property type="match status" value="1"/>
</dbReference>
<dbReference type="PANTHER" id="PTHR30560:SF3">
    <property type="entry name" value="TRIGGER FACTOR-LIKE PROTEIN TIG, CHLOROPLASTIC"/>
    <property type="match status" value="1"/>
</dbReference>
<dbReference type="Pfam" id="PF05698">
    <property type="entry name" value="Trigger_C"/>
    <property type="match status" value="1"/>
</dbReference>
<dbReference type="Pfam" id="PF05697">
    <property type="entry name" value="Trigger_N"/>
    <property type="match status" value="1"/>
</dbReference>
<dbReference type="PIRSF" id="PIRSF003095">
    <property type="entry name" value="Trigger_factor"/>
    <property type="match status" value="1"/>
</dbReference>
<dbReference type="SUPFAM" id="SSF54534">
    <property type="entry name" value="FKBP-like"/>
    <property type="match status" value="1"/>
</dbReference>
<dbReference type="SUPFAM" id="SSF109998">
    <property type="entry name" value="Triger factor/SurA peptide-binding domain-like"/>
    <property type="match status" value="1"/>
</dbReference>
<dbReference type="SUPFAM" id="SSF102735">
    <property type="entry name" value="Trigger factor ribosome-binding domain"/>
    <property type="match status" value="1"/>
</dbReference>
<name>TIG_DEHMB</name>